<comment type="function">
    <text evidence="1">Specifically methylates position 2 of adenine 2503 in 23S rRNA and position 2 of adenine 37 in tRNAs. m2A2503 modification seems to play a crucial role in the proofreading step occurring at the peptidyl transferase center and thus would serve to optimize ribosomal fidelity.</text>
</comment>
<comment type="catalytic activity">
    <reaction evidence="1">
        <text>adenosine(2503) in 23S rRNA + 2 reduced [2Fe-2S]-[ferredoxin] + 2 S-adenosyl-L-methionine = 2-methyladenosine(2503) in 23S rRNA + 5'-deoxyadenosine + L-methionine + 2 oxidized [2Fe-2S]-[ferredoxin] + S-adenosyl-L-homocysteine</text>
        <dbReference type="Rhea" id="RHEA:42916"/>
        <dbReference type="Rhea" id="RHEA-COMP:10000"/>
        <dbReference type="Rhea" id="RHEA-COMP:10001"/>
        <dbReference type="Rhea" id="RHEA-COMP:10152"/>
        <dbReference type="Rhea" id="RHEA-COMP:10282"/>
        <dbReference type="ChEBI" id="CHEBI:17319"/>
        <dbReference type="ChEBI" id="CHEBI:33737"/>
        <dbReference type="ChEBI" id="CHEBI:33738"/>
        <dbReference type="ChEBI" id="CHEBI:57844"/>
        <dbReference type="ChEBI" id="CHEBI:57856"/>
        <dbReference type="ChEBI" id="CHEBI:59789"/>
        <dbReference type="ChEBI" id="CHEBI:74411"/>
        <dbReference type="ChEBI" id="CHEBI:74497"/>
        <dbReference type="EC" id="2.1.1.192"/>
    </reaction>
</comment>
<comment type="catalytic activity">
    <reaction evidence="1">
        <text>adenosine(37) in tRNA + 2 reduced [2Fe-2S]-[ferredoxin] + 2 S-adenosyl-L-methionine = 2-methyladenosine(37) in tRNA + 5'-deoxyadenosine + L-methionine + 2 oxidized [2Fe-2S]-[ferredoxin] + S-adenosyl-L-homocysteine</text>
        <dbReference type="Rhea" id="RHEA:43332"/>
        <dbReference type="Rhea" id="RHEA-COMP:10000"/>
        <dbReference type="Rhea" id="RHEA-COMP:10001"/>
        <dbReference type="Rhea" id="RHEA-COMP:10162"/>
        <dbReference type="Rhea" id="RHEA-COMP:10485"/>
        <dbReference type="ChEBI" id="CHEBI:17319"/>
        <dbReference type="ChEBI" id="CHEBI:33737"/>
        <dbReference type="ChEBI" id="CHEBI:33738"/>
        <dbReference type="ChEBI" id="CHEBI:57844"/>
        <dbReference type="ChEBI" id="CHEBI:57856"/>
        <dbReference type="ChEBI" id="CHEBI:59789"/>
        <dbReference type="ChEBI" id="CHEBI:74411"/>
        <dbReference type="ChEBI" id="CHEBI:74497"/>
        <dbReference type="EC" id="2.1.1.192"/>
    </reaction>
</comment>
<comment type="cofactor">
    <cofactor evidence="1">
        <name>[4Fe-4S] cluster</name>
        <dbReference type="ChEBI" id="CHEBI:49883"/>
    </cofactor>
    <text evidence="1">Binds 1 [4Fe-4S] cluster. The cluster is coordinated with 3 cysteines and an exchangeable S-adenosyl-L-methionine.</text>
</comment>
<comment type="subcellular location">
    <subcellularLocation>
        <location evidence="1">Cytoplasm</location>
    </subcellularLocation>
</comment>
<comment type="miscellaneous">
    <text evidence="1">Reaction proceeds by a ping-pong mechanism involving intermediate methylation of a conserved cysteine residue.</text>
</comment>
<comment type="similarity">
    <text evidence="1">Belongs to the radical SAM superfamily. RlmN family.</text>
</comment>
<organism>
    <name type="scientific">Vibrio campbellii (strain ATCC BAA-1116)</name>
    <dbReference type="NCBI Taxonomy" id="2902295"/>
    <lineage>
        <taxon>Bacteria</taxon>
        <taxon>Pseudomonadati</taxon>
        <taxon>Pseudomonadota</taxon>
        <taxon>Gammaproteobacteria</taxon>
        <taxon>Vibrionales</taxon>
        <taxon>Vibrionaceae</taxon>
        <taxon>Vibrio</taxon>
    </lineage>
</organism>
<accession>A7MU39</accession>
<gene>
    <name evidence="1" type="primary">rlmN</name>
    <name type="ordered locus">VIBHAR_01065</name>
</gene>
<protein>
    <recommendedName>
        <fullName evidence="1">Dual-specificity RNA methyltransferase RlmN</fullName>
        <ecNumber evidence="1">2.1.1.192</ecNumber>
    </recommendedName>
    <alternativeName>
        <fullName evidence="1">23S rRNA (adenine(2503)-C(2))-methyltransferase</fullName>
    </alternativeName>
    <alternativeName>
        <fullName evidence="1">23S rRNA m2A2503 methyltransferase</fullName>
    </alternativeName>
    <alternativeName>
        <fullName evidence="1">Ribosomal RNA large subunit methyltransferase N</fullName>
    </alternativeName>
    <alternativeName>
        <fullName evidence="1">tRNA (adenine(37)-C(2))-methyltransferase</fullName>
    </alternativeName>
    <alternativeName>
        <fullName evidence="1">tRNA m2A37 methyltransferase</fullName>
    </alternativeName>
</protein>
<evidence type="ECO:0000255" key="1">
    <source>
        <dbReference type="HAMAP-Rule" id="MF_01849"/>
    </source>
</evidence>
<evidence type="ECO:0000255" key="2">
    <source>
        <dbReference type="PROSITE-ProRule" id="PRU01266"/>
    </source>
</evidence>
<proteinExistence type="inferred from homology"/>
<feature type="chain" id="PRO_0000350518" description="Dual-specificity RNA methyltransferase RlmN">
    <location>
        <begin position="1"/>
        <end position="375"/>
    </location>
</feature>
<feature type="domain" description="Radical SAM core" evidence="2">
    <location>
        <begin position="100"/>
        <end position="339"/>
    </location>
</feature>
<feature type="active site" description="Proton acceptor" evidence="1">
    <location>
        <position position="94"/>
    </location>
</feature>
<feature type="active site" description="S-methylcysteine intermediate" evidence="1">
    <location>
        <position position="344"/>
    </location>
</feature>
<feature type="binding site" evidence="1">
    <location>
        <position position="114"/>
    </location>
    <ligand>
        <name>[4Fe-4S] cluster</name>
        <dbReference type="ChEBI" id="CHEBI:49883"/>
        <note>4Fe-4S-S-AdoMet</note>
    </ligand>
</feature>
<feature type="binding site" evidence="1">
    <location>
        <position position="118"/>
    </location>
    <ligand>
        <name>[4Fe-4S] cluster</name>
        <dbReference type="ChEBI" id="CHEBI:49883"/>
        <note>4Fe-4S-S-AdoMet</note>
    </ligand>
</feature>
<feature type="binding site" evidence="1">
    <location>
        <position position="121"/>
    </location>
    <ligand>
        <name>[4Fe-4S] cluster</name>
        <dbReference type="ChEBI" id="CHEBI:49883"/>
        <note>4Fe-4S-S-AdoMet</note>
    </ligand>
</feature>
<feature type="binding site" evidence="1">
    <location>
        <begin position="168"/>
        <end position="169"/>
    </location>
    <ligand>
        <name>S-adenosyl-L-methionine</name>
        <dbReference type="ChEBI" id="CHEBI:59789"/>
    </ligand>
</feature>
<feature type="binding site" evidence="1">
    <location>
        <position position="200"/>
    </location>
    <ligand>
        <name>S-adenosyl-L-methionine</name>
        <dbReference type="ChEBI" id="CHEBI:59789"/>
    </ligand>
</feature>
<feature type="binding site" evidence="1">
    <location>
        <begin position="222"/>
        <end position="224"/>
    </location>
    <ligand>
        <name>S-adenosyl-L-methionine</name>
        <dbReference type="ChEBI" id="CHEBI:59789"/>
    </ligand>
</feature>
<feature type="binding site" evidence="1">
    <location>
        <position position="301"/>
    </location>
    <ligand>
        <name>S-adenosyl-L-methionine</name>
        <dbReference type="ChEBI" id="CHEBI:59789"/>
    </ligand>
</feature>
<feature type="disulfide bond" description="(transient)" evidence="1">
    <location>
        <begin position="107"/>
        <end position="344"/>
    </location>
</feature>
<name>RLMN_VIBC1</name>
<keyword id="KW-0004">4Fe-4S</keyword>
<keyword id="KW-0963">Cytoplasm</keyword>
<keyword id="KW-1015">Disulfide bond</keyword>
<keyword id="KW-0408">Iron</keyword>
<keyword id="KW-0411">Iron-sulfur</keyword>
<keyword id="KW-0479">Metal-binding</keyword>
<keyword id="KW-0489">Methyltransferase</keyword>
<keyword id="KW-0698">rRNA processing</keyword>
<keyword id="KW-0949">S-adenosyl-L-methionine</keyword>
<keyword id="KW-0808">Transferase</keyword>
<keyword id="KW-0819">tRNA processing</keyword>
<reference key="1">
    <citation type="submission" date="2007-08" db="EMBL/GenBank/DDBJ databases">
        <authorList>
            <consortium name="The Vibrio harveyi Genome Sequencing Project"/>
            <person name="Bassler B."/>
            <person name="Clifton S.W."/>
            <person name="Fulton L."/>
            <person name="Delehaunty K."/>
            <person name="Fronick C."/>
            <person name="Harrison M."/>
            <person name="Markivic C."/>
            <person name="Fulton R."/>
            <person name="Tin-Wollam A.-M."/>
            <person name="Shah N."/>
            <person name="Pepin K."/>
            <person name="Nash W."/>
            <person name="Thiruvilangam P."/>
            <person name="Bhonagiri V."/>
            <person name="Waters C."/>
            <person name="Tu K.C."/>
            <person name="Irgon J."/>
            <person name="Wilson R.K."/>
        </authorList>
    </citation>
    <scope>NUCLEOTIDE SEQUENCE [LARGE SCALE GENOMIC DNA]</scope>
    <source>
        <strain>ATCC BAA-1116 / BB120</strain>
    </source>
</reference>
<dbReference type="EC" id="2.1.1.192" evidence="1"/>
<dbReference type="EMBL" id="CP000789">
    <property type="protein sequence ID" value="ABU70058.1"/>
    <property type="molecule type" value="Genomic_DNA"/>
</dbReference>
<dbReference type="RefSeq" id="WP_005532587.1">
    <property type="nucleotide sequence ID" value="NC_022269.1"/>
</dbReference>
<dbReference type="SMR" id="A7MU39"/>
<dbReference type="KEGG" id="vha:VIBHAR_01065"/>
<dbReference type="PATRIC" id="fig|338187.25.peg.1563"/>
<dbReference type="Proteomes" id="UP000008152">
    <property type="component" value="Chromosome I"/>
</dbReference>
<dbReference type="GO" id="GO:0005737">
    <property type="term" value="C:cytoplasm"/>
    <property type="evidence" value="ECO:0007669"/>
    <property type="project" value="UniProtKB-SubCell"/>
</dbReference>
<dbReference type="GO" id="GO:0051539">
    <property type="term" value="F:4 iron, 4 sulfur cluster binding"/>
    <property type="evidence" value="ECO:0007669"/>
    <property type="project" value="UniProtKB-UniRule"/>
</dbReference>
<dbReference type="GO" id="GO:0046872">
    <property type="term" value="F:metal ion binding"/>
    <property type="evidence" value="ECO:0007669"/>
    <property type="project" value="UniProtKB-KW"/>
</dbReference>
<dbReference type="GO" id="GO:0070040">
    <property type="term" value="F:rRNA (adenine(2503)-C2-)-methyltransferase activity"/>
    <property type="evidence" value="ECO:0007669"/>
    <property type="project" value="UniProtKB-UniRule"/>
</dbReference>
<dbReference type="GO" id="GO:0019843">
    <property type="term" value="F:rRNA binding"/>
    <property type="evidence" value="ECO:0007669"/>
    <property type="project" value="UniProtKB-UniRule"/>
</dbReference>
<dbReference type="GO" id="GO:0002935">
    <property type="term" value="F:tRNA (adenine(37)-C2)-methyltransferase activity"/>
    <property type="evidence" value="ECO:0007669"/>
    <property type="project" value="UniProtKB-UniRule"/>
</dbReference>
<dbReference type="GO" id="GO:0000049">
    <property type="term" value="F:tRNA binding"/>
    <property type="evidence" value="ECO:0007669"/>
    <property type="project" value="UniProtKB-UniRule"/>
</dbReference>
<dbReference type="GO" id="GO:0070475">
    <property type="term" value="P:rRNA base methylation"/>
    <property type="evidence" value="ECO:0007669"/>
    <property type="project" value="UniProtKB-UniRule"/>
</dbReference>
<dbReference type="GO" id="GO:0030488">
    <property type="term" value="P:tRNA methylation"/>
    <property type="evidence" value="ECO:0007669"/>
    <property type="project" value="UniProtKB-UniRule"/>
</dbReference>
<dbReference type="CDD" id="cd01335">
    <property type="entry name" value="Radical_SAM"/>
    <property type="match status" value="1"/>
</dbReference>
<dbReference type="FunFam" id="1.10.150.530:FF:000003">
    <property type="entry name" value="Dual-specificity RNA methyltransferase RlmN"/>
    <property type="match status" value="1"/>
</dbReference>
<dbReference type="FunFam" id="3.20.20.70:FF:000008">
    <property type="entry name" value="Dual-specificity RNA methyltransferase RlmN"/>
    <property type="match status" value="1"/>
</dbReference>
<dbReference type="Gene3D" id="1.10.150.530">
    <property type="match status" value="1"/>
</dbReference>
<dbReference type="Gene3D" id="3.20.20.70">
    <property type="entry name" value="Aldolase class I"/>
    <property type="match status" value="1"/>
</dbReference>
<dbReference type="HAMAP" id="MF_01849">
    <property type="entry name" value="RNA_methyltr_RlmN"/>
    <property type="match status" value="1"/>
</dbReference>
<dbReference type="InterPro" id="IPR013785">
    <property type="entry name" value="Aldolase_TIM"/>
</dbReference>
<dbReference type="InterPro" id="IPR040072">
    <property type="entry name" value="Methyltransferase_A"/>
</dbReference>
<dbReference type="InterPro" id="IPR048641">
    <property type="entry name" value="RlmN_N"/>
</dbReference>
<dbReference type="InterPro" id="IPR027492">
    <property type="entry name" value="RNA_MTrfase_RlmN"/>
</dbReference>
<dbReference type="InterPro" id="IPR004383">
    <property type="entry name" value="rRNA_lsu_MTrfase_RlmN/Cfr"/>
</dbReference>
<dbReference type="InterPro" id="IPR007197">
    <property type="entry name" value="rSAM"/>
</dbReference>
<dbReference type="NCBIfam" id="NF008396">
    <property type="entry name" value="PRK11194.1"/>
    <property type="match status" value="1"/>
</dbReference>
<dbReference type="NCBIfam" id="TIGR00048">
    <property type="entry name" value="rRNA_mod_RlmN"/>
    <property type="match status" value="1"/>
</dbReference>
<dbReference type="PANTHER" id="PTHR30544">
    <property type="entry name" value="23S RRNA METHYLTRANSFERASE"/>
    <property type="match status" value="1"/>
</dbReference>
<dbReference type="PANTHER" id="PTHR30544:SF5">
    <property type="entry name" value="RADICAL SAM CORE DOMAIN-CONTAINING PROTEIN"/>
    <property type="match status" value="1"/>
</dbReference>
<dbReference type="Pfam" id="PF04055">
    <property type="entry name" value="Radical_SAM"/>
    <property type="match status" value="1"/>
</dbReference>
<dbReference type="Pfam" id="PF21016">
    <property type="entry name" value="RlmN_N"/>
    <property type="match status" value="1"/>
</dbReference>
<dbReference type="PIRSF" id="PIRSF006004">
    <property type="entry name" value="CHP00048"/>
    <property type="match status" value="1"/>
</dbReference>
<dbReference type="SFLD" id="SFLDF00275">
    <property type="entry name" value="adenosine_C2_methyltransferase"/>
    <property type="match status" value="1"/>
</dbReference>
<dbReference type="SFLD" id="SFLDG01062">
    <property type="entry name" value="methyltransferase_(Class_A)"/>
    <property type="match status" value="1"/>
</dbReference>
<dbReference type="SUPFAM" id="SSF102114">
    <property type="entry name" value="Radical SAM enzymes"/>
    <property type="match status" value="1"/>
</dbReference>
<dbReference type="PROSITE" id="PS51918">
    <property type="entry name" value="RADICAL_SAM"/>
    <property type="match status" value="1"/>
</dbReference>
<sequence>MTTEKINLLDFDRKGMRQFFADELGEKAFRADQVMKWIYHFGVDDFDNMTNINKKLREKLQHKCEIKAPTVAEAQHSSDGTIKWAMKVGDQDVETVYIPEDDRATLCVSSQVGCALECKFCSTAQQGFNRNLKVSEIIGQVWRAAREIGLQKETGRRPITNVVMMGMGEPLLNMKNLIPALEIMLDDLGFGLSKRRVTVSTSGVVSGLDQMTGKIDVALAISLHAPNDELRSQIMPINDRWDIQDFLASVRRYIASSNANRGKVTVEYVLLDHVNDDMDHARELAELMKDTPCKINLIPFNPYPGSPYKKPSNSRIDRFQKTLMQYEHTVTVRKTRGDDIDAACGQLVGDVIDRTKRTAALKAARGAETIDVKAV</sequence>